<evidence type="ECO:0000255" key="1">
    <source>
        <dbReference type="HAMAP-Rule" id="MF_00156"/>
    </source>
</evidence>
<reference key="1">
    <citation type="journal article" date="1999" name="Nature">
        <title>Evidence for lateral gene transfer between Archaea and Bacteria from genome sequence of Thermotoga maritima.</title>
        <authorList>
            <person name="Nelson K.E."/>
            <person name="Clayton R.A."/>
            <person name="Gill S.R."/>
            <person name="Gwinn M.L."/>
            <person name="Dodson R.J."/>
            <person name="Haft D.H."/>
            <person name="Hickey E.K."/>
            <person name="Peterson J.D."/>
            <person name="Nelson W.C."/>
            <person name="Ketchum K.A."/>
            <person name="McDonald L.A."/>
            <person name="Utterback T.R."/>
            <person name="Malek J.A."/>
            <person name="Linher K.D."/>
            <person name="Garrett M.M."/>
            <person name="Stewart A.M."/>
            <person name="Cotton M.D."/>
            <person name="Pratt M.S."/>
            <person name="Phillips C.A."/>
            <person name="Richardson D.L."/>
            <person name="Heidelberg J.F."/>
            <person name="Sutton G.G."/>
            <person name="Fleischmann R.D."/>
            <person name="Eisen J.A."/>
            <person name="White O."/>
            <person name="Salzberg S.L."/>
            <person name="Smith H.O."/>
            <person name="Venter J.C."/>
            <person name="Fraser C.M."/>
        </authorList>
    </citation>
    <scope>NUCLEOTIDE SEQUENCE [LARGE SCALE GENOMIC DNA]</scope>
    <source>
        <strain>ATCC 43589 / DSM 3109 / JCM 10099 / NBRC 100826 / MSB8</strain>
    </source>
</reference>
<keyword id="KW-0963">Cytoplasm</keyword>
<keyword id="KW-0460">Magnesium</keyword>
<keyword id="KW-0479">Metal-binding</keyword>
<keyword id="KW-0566">Pantothenate biosynthesis</keyword>
<keyword id="KW-1185">Reference proteome</keyword>
<keyword id="KW-0808">Transferase</keyword>
<dbReference type="EC" id="2.1.2.11" evidence="1"/>
<dbReference type="EMBL" id="AE000512">
    <property type="protein sequence ID" value="AAD36793.1"/>
    <property type="molecule type" value="Genomic_DNA"/>
</dbReference>
<dbReference type="PIR" id="G72216">
    <property type="entry name" value="G72216"/>
</dbReference>
<dbReference type="RefSeq" id="NP_229526.1">
    <property type="nucleotide sequence ID" value="NC_000853.1"/>
</dbReference>
<dbReference type="RefSeq" id="WP_004082243.1">
    <property type="nucleotide sequence ID" value="NC_000853.1"/>
</dbReference>
<dbReference type="SMR" id="Q9X251"/>
<dbReference type="FunCoup" id="Q9X251">
    <property type="interactions" value="314"/>
</dbReference>
<dbReference type="STRING" id="243274.TM_1728"/>
<dbReference type="PaxDb" id="243274-THEMA_05595"/>
<dbReference type="EnsemblBacteria" id="AAD36793">
    <property type="protein sequence ID" value="AAD36793"/>
    <property type="gene ID" value="TM_1728"/>
</dbReference>
<dbReference type="KEGG" id="tma:TM1728"/>
<dbReference type="KEGG" id="tmi:THEMA_05595"/>
<dbReference type="KEGG" id="tmm:Tmari_1736"/>
<dbReference type="KEGG" id="tmw:THMA_1770"/>
<dbReference type="eggNOG" id="COG0413">
    <property type="taxonomic scope" value="Bacteria"/>
</dbReference>
<dbReference type="InParanoid" id="Q9X251"/>
<dbReference type="OrthoDB" id="9781789at2"/>
<dbReference type="UniPathway" id="UPA00028">
    <property type="reaction ID" value="UER00003"/>
</dbReference>
<dbReference type="Proteomes" id="UP000008183">
    <property type="component" value="Chromosome"/>
</dbReference>
<dbReference type="GO" id="GO:0005737">
    <property type="term" value="C:cytoplasm"/>
    <property type="evidence" value="ECO:0000318"/>
    <property type="project" value="GO_Central"/>
</dbReference>
<dbReference type="GO" id="GO:0003864">
    <property type="term" value="F:3-methyl-2-oxobutanoate hydroxymethyltransferase activity"/>
    <property type="evidence" value="ECO:0000318"/>
    <property type="project" value="GO_Central"/>
</dbReference>
<dbReference type="GO" id="GO:0000287">
    <property type="term" value="F:magnesium ion binding"/>
    <property type="evidence" value="ECO:0000318"/>
    <property type="project" value="GO_Central"/>
</dbReference>
<dbReference type="GO" id="GO:0015940">
    <property type="term" value="P:pantothenate biosynthetic process"/>
    <property type="evidence" value="ECO:0000318"/>
    <property type="project" value="GO_Central"/>
</dbReference>
<dbReference type="CDD" id="cd06557">
    <property type="entry name" value="KPHMT-like"/>
    <property type="match status" value="1"/>
</dbReference>
<dbReference type="FunFam" id="3.20.20.60:FF:000003">
    <property type="entry name" value="3-methyl-2-oxobutanoate hydroxymethyltransferase"/>
    <property type="match status" value="1"/>
</dbReference>
<dbReference type="Gene3D" id="3.20.20.60">
    <property type="entry name" value="Phosphoenolpyruvate-binding domains"/>
    <property type="match status" value="1"/>
</dbReference>
<dbReference type="HAMAP" id="MF_00156">
    <property type="entry name" value="PanB"/>
    <property type="match status" value="1"/>
</dbReference>
<dbReference type="InterPro" id="IPR003700">
    <property type="entry name" value="Pantoate_hydroxy_MeTrfase"/>
</dbReference>
<dbReference type="InterPro" id="IPR015813">
    <property type="entry name" value="Pyrv/PenolPyrv_kinase-like_dom"/>
</dbReference>
<dbReference type="InterPro" id="IPR040442">
    <property type="entry name" value="Pyrv_kinase-like_dom_sf"/>
</dbReference>
<dbReference type="NCBIfam" id="TIGR00222">
    <property type="entry name" value="panB"/>
    <property type="match status" value="1"/>
</dbReference>
<dbReference type="NCBIfam" id="NF001452">
    <property type="entry name" value="PRK00311.1"/>
    <property type="match status" value="1"/>
</dbReference>
<dbReference type="PANTHER" id="PTHR20881">
    <property type="entry name" value="3-METHYL-2-OXOBUTANOATE HYDROXYMETHYLTRANSFERASE"/>
    <property type="match status" value="1"/>
</dbReference>
<dbReference type="PANTHER" id="PTHR20881:SF0">
    <property type="entry name" value="3-METHYL-2-OXOBUTANOATE HYDROXYMETHYLTRANSFERASE"/>
    <property type="match status" value="1"/>
</dbReference>
<dbReference type="Pfam" id="PF02548">
    <property type="entry name" value="Pantoate_transf"/>
    <property type="match status" value="1"/>
</dbReference>
<dbReference type="PIRSF" id="PIRSF000388">
    <property type="entry name" value="Pantoate_hydroxy_MeTrfase"/>
    <property type="match status" value="1"/>
</dbReference>
<dbReference type="SUPFAM" id="SSF51621">
    <property type="entry name" value="Phosphoenolpyruvate/pyruvate domain"/>
    <property type="match status" value="1"/>
</dbReference>
<name>PANB_THEMA</name>
<comment type="function">
    <text evidence="1">Catalyzes the reversible reaction in which hydroxymethyl group from 5,10-methylenetetrahydrofolate is transferred onto alpha-ketoisovalerate to form ketopantoate.</text>
</comment>
<comment type="catalytic activity">
    <reaction evidence="1">
        <text>3-methyl-2-oxobutanoate + (6R)-5,10-methylene-5,6,7,8-tetrahydrofolate + H2O = 2-dehydropantoate + (6S)-5,6,7,8-tetrahydrofolate</text>
        <dbReference type="Rhea" id="RHEA:11824"/>
        <dbReference type="ChEBI" id="CHEBI:11561"/>
        <dbReference type="ChEBI" id="CHEBI:11851"/>
        <dbReference type="ChEBI" id="CHEBI:15377"/>
        <dbReference type="ChEBI" id="CHEBI:15636"/>
        <dbReference type="ChEBI" id="CHEBI:57453"/>
        <dbReference type="EC" id="2.1.2.11"/>
    </reaction>
</comment>
<comment type="cofactor">
    <cofactor evidence="1">
        <name>Mg(2+)</name>
        <dbReference type="ChEBI" id="CHEBI:18420"/>
    </cofactor>
    <text evidence="1">Binds 1 Mg(2+) ion per subunit.</text>
</comment>
<comment type="pathway">
    <text evidence="1">Cofactor biosynthesis; (R)-pantothenate biosynthesis; (R)-pantoate from 3-methyl-2-oxobutanoate: step 1/2.</text>
</comment>
<comment type="subunit">
    <text evidence="1">Homodecamer; pentamer of dimers.</text>
</comment>
<comment type="subcellular location">
    <subcellularLocation>
        <location evidence="1">Cytoplasm</location>
    </subcellularLocation>
</comment>
<comment type="similarity">
    <text evidence="1">Belongs to the PanB family.</text>
</comment>
<protein>
    <recommendedName>
        <fullName evidence="1">3-methyl-2-oxobutanoate hydroxymethyltransferase</fullName>
        <ecNumber evidence="1">2.1.2.11</ecNumber>
    </recommendedName>
    <alternativeName>
        <fullName evidence="1">Ketopantoate hydroxymethyltransferase</fullName>
        <shortName evidence="1">KPHMT</shortName>
    </alternativeName>
</protein>
<sequence>MNVEKLKKMKGKEKIVMVTAYDAPSARIARDAGIDVILVGDSLGNNVLGYENTIPVTMEEMLIHVAAVKRGAPDAFIVADMPFLSYQTSVEKAVENAGKFLKVGANAVKIEGGEEFGELVQKLVESGIPVMGHIGLTPQFVNRFGGYRVQGKTEKNREYLLRSARELEKRGAFAIVLELVVEEVAKEITESVSIPTIGIGSGRFCDGQVLVWHDLLGLNPDFAPRFSKKYANLYEVILKALQEFRREVKKGLFPTEEHSFTDKSKGGVSS</sequence>
<feature type="chain" id="PRO_0000184901" description="3-methyl-2-oxobutanoate hydroxymethyltransferase">
    <location>
        <begin position="1"/>
        <end position="270"/>
    </location>
</feature>
<feature type="active site" description="Proton acceptor" evidence="1">
    <location>
        <position position="178"/>
    </location>
</feature>
<feature type="binding site" evidence="1">
    <location>
        <begin position="41"/>
        <end position="42"/>
    </location>
    <ligand>
        <name>3-methyl-2-oxobutanoate</name>
        <dbReference type="ChEBI" id="CHEBI:11851"/>
    </ligand>
</feature>
<feature type="binding site" evidence="1">
    <location>
        <position position="41"/>
    </location>
    <ligand>
        <name>Mg(2+)</name>
        <dbReference type="ChEBI" id="CHEBI:18420"/>
    </ligand>
</feature>
<feature type="binding site" evidence="1">
    <location>
        <position position="80"/>
    </location>
    <ligand>
        <name>3-methyl-2-oxobutanoate</name>
        <dbReference type="ChEBI" id="CHEBI:11851"/>
    </ligand>
</feature>
<feature type="binding site" evidence="1">
    <location>
        <position position="80"/>
    </location>
    <ligand>
        <name>Mg(2+)</name>
        <dbReference type="ChEBI" id="CHEBI:18420"/>
    </ligand>
</feature>
<feature type="binding site" evidence="1">
    <location>
        <position position="109"/>
    </location>
    <ligand>
        <name>3-methyl-2-oxobutanoate</name>
        <dbReference type="ChEBI" id="CHEBI:11851"/>
    </ligand>
</feature>
<feature type="binding site" evidence="1">
    <location>
        <position position="111"/>
    </location>
    <ligand>
        <name>Mg(2+)</name>
        <dbReference type="ChEBI" id="CHEBI:18420"/>
    </ligand>
</feature>
<accession>Q9X251</accession>
<gene>
    <name evidence="1" type="primary">panB</name>
    <name type="ordered locus">TM_1728</name>
</gene>
<organism>
    <name type="scientific">Thermotoga maritima (strain ATCC 43589 / DSM 3109 / JCM 10099 / NBRC 100826 / MSB8)</name>
    <dbReference type="NCBI Taxonomy" id="243274"/>
    <lineage>
        <taxon>Bacteria</taxon>
        <taxon>Thermotogati</taxon>
        <taxon>Thermotogota</taxon>
        <taxon>Thermotogae</taxon>
        <taxon>Thermotogales</taxon>
        <taxon>Thermotogaceae</taxon>
        <taxon>Thermotoga</taxon>
    </lineage>
</organism>
<proteinExistence type="inferred from homology"/>